<dbReference type="EC" id="1.1.1.25" evidence="1"/>
<dbReference type="EMBL" id="CP000116">
    <property type="protein sequence ID" value="AAZ98457.1"/>
    <property type="molecule type" value="Genomic_DNA"/>
</dbReference>
<dbReference type="RefSeq" id="WP_011313016.1">
    <property type="nucleotide sequence ID" value="NC_007404.1"/>
</dbReference>
<dbReference type="SMR" id="Q3SFZ9"/>
<dbReference type="STRING" id="292415.Tbd_2504"/>
<dbReference type="KEGG" id="tbd:Tbd_2504"/>
<dbReference type="eggNOG" id="COG0169">
    <property type="taxonomic scope" value="Bacteria"/>
</dbReference>
<dbReference type="HOGENOM" id="CLU_044063_2_1_4"/>
<dbReference type="OrthoDB" id="9776868at2"/>
<dbReference type="UniPathway" id="UPA00053">
    <property type="reaction ID" value="UER00087"/>
</dbReference>
<dbReference type="Proteomes" id="UP000008291">
    <property type="component" value="Chromosome"/>
</dbReference>
<dbReference type="GO" id="GO:0005829">
    <property type="term" value="C:cytosol"/>
    <property type="evidence" value="ECO:0007669"/>
    <property type="project" value="TreeGrafter"/>
</dbReference>
<dbReference type="GO" id="GO:0050661">
    <property type="term" value="F:NADP binding"/>
    <property type="evidence" value="ECO:0007669"/>
    <property type="project" value="InterPro"/>
</dbReference>
<dbReference type="GO" id="GO:0004764">
    <property type="term" value="F:shikimate 3-dehydrogenase (NADP+) activity"/>
    <property type="evidence" value="ECO:0007669"/>
    <property type="project" value="UniProtKB-UniRule"/>
</dbReference>
<dbReference type="GO" id="GO:0008652">
    <property type="term" value="P:amino acid biosynthetic process"/>
    <property type="evidence" value="ECO:0007669"/>
    <property type="project" value="UniProtKB-KW"/>
</dbReference>
<dbReference type="GO" id="GO:0009073">
    <property type="term" value="P:aromatic amino acid family biosynthetic process"/>
    <property type="evidence" value="ECO:0007669"/>
    <property type="project" value="UniProtKB-KW"/>
</dbReference>
<dbReference type="GO" id="GO:0009423">
    <property type="term" value="P:chorismate biosynthetic process"/>
    <property type="evidence" value="ECO:0007669"/>
    <property type="project" value="UniProtKB-UniRule"/>
</dbReference>
<dbReference type="GO" id="GO:0019632">
    <property type="term" value="P:shikimate metabolic process"/>
    <property type="evidence" value="ECO:0007669"/>
    <property type="project" value="InterPro"/>
</dbReference>
<dbReference type="CDD" id="cd01065">
    <property type="entry name" value="NAD_bind_Shikimate_DH"/>
    <property type="match status" value="1"/>
</dbReference>
<dbReference type="FunFam" id="3.40.50.10860:FF:000006">
    <property type="entry name" value="Shikimate dehydrogenase (NADP(+))"/>
    <property type="match status" value="1"/>
</dbReference>
<dbReference type="Gene3D" id="3.40.50.10860">
    <property type="entry name" value="Leucine Dehydrogenase, chain A, domain 1"/>
    <property type="match status" value="1"/>
</dbReference>
<dbReference type="Gene3D" id="3.40.50.720">
    <property type="entry name" value="NAD(P)-binding Rossmann-like Domain"/>
    <property type="match status" value="1"/>
</dbReference>
<dbReference type="HAMAP" id="MF_00222">
    <property type="entry name" value="Shikimate_DH_AroE"/>
    <property type="match status" value="1"/>
</dbReference>
<dbReference type="InterPro" id="IPR046346">
    <property type="entry name" value="Aminoacid_DH-like_N_sf"/>
</dbReference>
<dbReference type="InterPro" id="IPR036291">
    <property type="entry name" value="NAD(P)-bd_dom_sf"/>
</dbReference>
<dbReference type="InterPro" id="IPR041121">
    <property type="entry name" value="SDH_C"/>
</dbReference>
<dbReference type="InterPro" id="IPR011342">
    <property type="entry name" value="Shikimate_DH"/>
</dbReference>
<dbReference type="InterPro" id="IPR013708">
    <property type="entry name" value="Shikimate_DH-bd_N"/>
</dbReference>
<dbReference type="InterPro" id="IPR022893">
    <property type="entry name" value="Shikimate_DH_fam"/>
</dbReference>
<dbReference type="InterPro" id="IPR006151">
    <property type="entry name" value="Shikm_DH/Glu-tRNA_Rdtase"/>
</dbReference>
<dbReference type="NCBIfam" id="TIGR00507">
    <property type="entry name" value="aroE"/>
    <property type="match status" value="1"/>
</dbReference>
<dbReference type="NCBIfam" id="NF001310">
    <property type="entry name" value="PRK00258.1-2"/>
    <property type="match status" value="1"/>
</dbReference>
<dbReference type="PANTHER" id="PTHR21089:SF1">
    <property type="entry name" value="BIFUNCTIONAL 3-DEHYDROQUINATE DEHYDRATASE_SHIKIMATE DEHYDROGENASE, CHLOROPLASTIC"/>
    <property type="match status" value="1"/>
</dbReference>
<dbReference type="PANTHER" id="PTHR21089">
    <property type="entry name" value="SHIKIMATE DEHYDROGENASE"/>
    <property type="match status" value="1"/>
</dbReference>
<dbReference type="Pfam" id="PF18317">
    <property type="entry name" value="SDH_C"/>
    <property type="match status" value="1"/>
</dbReference>
<dbReference type="Pfam" id="PF01488">
    <property type="entry name" value="Shikimate_DH"/>
    <property type="match status" value="1"/>
</dbReference>
<dbReference type="Pfam" id="PF08501">
    <property type="entry name" value="Shikimate_dh_N"/>
    <property type="match status" value="1"/>
</dbReference>
<dbReference type="SUPFAM" id="SSF53223">
    <property type="entry name" value="Aminoacid dehydrogenase-like, N-terminal domain"/>
    <property type="match status" value="1"/>
</dbReference>
<dbReference type="SUPFAM" id="SSF51735">
    <property type="entry name" value="NAD(P)-binding Rossmann-fold domains"/>
    <property type="match status" value="1"/>
</dbReference>
<reference key="1">
    <citation type="journal article" date="2006" name="J. Bacteriol.">
        <title>The genome sequence of the obligately chemolithoautotrophic, facultatively anaerobic bacterium Thiobacillus denitrificans.</title>
        <authorList>
            <person name="Beller H.R."/>
            <person name="Chain P.S."/>
            <person name="Letain T.E."/>
            <person name="Chakicherla A."/>
            <person name="Larimer F.W."/>
            <person name="Richardson P.M."/>
            <person name="Coleman M.A."/>
            <person name="Wood A.P."/>
            <person name="Kelly D.P."/>
        </authorList>
    </citation>
    <scope>NUCLEOTIDE SEQUENCE [LARGE SCALE GENOMIC DNA]</scope>
    <source>
        <strain>ATCC 25259 / T1</strain>
    </source>
</reference>
<organism>
    <name type="scientific">Thiobacillus denitrificans (strain ATCC 25259 / T1)</name>
    <dbReference type="NCBI Taxonomy" id="292415"/>
    <lineage>
        <taxon>Bacteria</taxon>
        <taxon>Pseudomonadati</taxon>
        <taxon>Pseudomonadota</taxon>
        <taxon>Betaproteobacteria</taxon>
        <taxon>Nitrosomonadales</taxon>
        <taxon>Thiobacillaceae</taxon>
        <taxon>Thiobacillus</taxon>
    </lineage>
</organism>
<accession>Q3SFZ9</accession>
<gene>
    <name evidence="1" type="primary">aroE</name>
    <name type="ordered locus">Tbd_2504</name>
</gene>
<sequence>MTDRYAVFGHPIAHSKSPQIHAAFARQTGQDMCYEAILAPLEGFTESIARFAAQGGRGANVTVPFKEEAFRLADRLTPRAERAGAVNTLMFDADGILGDNTDGTGLVADLTGNLKRPLATRRILLVGAGGAARGVIAPLLEQAPAELVIANRTVSRAEQLAELFDGRLRACGFDALDTPFDVVINATAASLAGELPPLPPQVFGTGALAYDMMYGRDTPFLAFARAHGADTADGLGMLVEQAAEAFHLWRGVRPDTAPVIAALRA</sequence>
<name>AROE_THIDA</name>
<feature type="chain" id="PRO_0000325180" description="Shikimate dehydrogenase (NADP(+))">
    <location>
        <begin position="1"/>
        <end position="265"/>
    </location>
</feature>
<feature type="active site" description="Proton acceptor" evidence="1">
    <location>
        <position position="66"/>
    </location>
</feature>
<feature type="binding site" evidence="1">
    <location>
        <begin position="15"/>
        <end position="17"/>
    </location>
    <ligand>
        <name>shikimate</name>
        <dbReference type="ChEBI" id="CHEBI:36208"/>
    </ligand>
</feature>
<feature type="binding site" evidence="1">
    <location>
        <position position="62"/>
    </location>
    <ligand>
        <name>shikimate</name>
        <dbReference type="ChEBI" id="CHEBI:36208"/>
    </ligand>
</feature>
<feature type="binding site" evidence="1">
    <location>
        <position position="87"/>
    </location>
    <ligand>
        <name>shikimate</name>
        <dbReference type="ChEBI" id="CHEBI:36208"/>
    </ligand>
</feature>
<feature type="binding site" evidence="1">
    <location>
        <position position="102"/>
    </location>
    <ligand>
        <name>shikimate</name>
        <dbReference type="ChEBI" id="CHEBI:36208"/>
    </ligand>
</feature>
<feature type="binding site" evidence="1">
    <location>
        <begin position="127"/>
        <end position="131"/>
    </location>
    <ligand>
        <name>NADP(+)</name>
        <dbReference type="ChEBI" id="CHEBI:58349"/>
    </ligand>
</feature>
<feature type="binding site" evidence="1">
    <location>
        <begin position="151"/>
        <end position="156"/>
    </location>
    <ligand>
        <name>NADP(+)</name>
        <dbReference type="ChEBI" id="CHEBI:58349"/>
    </ligand>
</feature>
<feature type="binding site" evidence="1">
    <location>
        <position position="212"/>
    </location>
    <ligand>
        <name>NADP(+)</name>
        <dbReference type="ChEBI" id="CHEBI:58349"/>
    </ligand>
</feature>
<feature type="binding site" evidence="1">
    <location>
        <position position="214"/>
    </location>
    <ligand>
        <name>shikimate</name>
        <dbReference type="ChEBI" id="CHEBI:36208"/>
    </ligand>
</feature>
<feature type="binding site" evidence="1">
    <location>
        <position position="234"/>
    </location>
    <ligand>
        <name>NADP(+)</name>
        <dbReference type="ChEBI" id="CHEBI:58349"/>
    </ligand>
</feature>
<comment type="function">
    <text evidence="1">Involved in the biosynthesis of the chorismate, which leads to the biosynthesis of aromatic amino acids. Catalyzes the reversible NADPH linked reduction of 3-dehydroshikimate (DHSA) to yield shikimate (SA).</text>
</comment>
<comment type="catalytic activity">
    <reaction evidence="1">
        <text>shikimate + NADP(+) = 3-dehydroshikimate + NADPH + H(+)</text>
        <dbReference type="Rhea" id="RHEA:17737"/>
        <dbReference type="ChEBI" id="CHEBI:15378"/>
        <dbReference type="ChEBI" id="CHEBI:16630"/>
        <dbReference type="ChEBI" id="CHEBI:36208"/>
        <dbReference type="ChEBI" id="CHEBI:57783"/>
        <dbReference type="ChEBI" id="CHEBI:58349"/>
        <dbReference type="EC" id="1.1.1.25"/>
    </reaction>
</comment>
<comment type="pathway">
    <text evidence="1">Metabolic intermediate biosynthesis; chorismate biosynthesis; chorismate from D-erythrose 4-phosphate and phosphoenolpyruvate: step 4/7.</text>
</comment>
<comment type="subunit">
    <text evidence="1">Homodimer.</text>
</comment>
<comment type="similarity">
    <text evidence="1">Belongs to the shikimate dehydrogenase family.</text>
</comment>
<evidence type="ECO:0000255" key="1">
    <source>
        <dbReference type="HAMAP-Rule" id="MF_00222"/>
    </source>
</evidence>
<keyword id="KW-0028">Amino-acid biosynthesis</keyword>
<keyword id="KW-0057">Aromatic amino acid biosynthesis</keyword>
<keyword id="KW-0521">NADP</keyword>
<keyword id="KW-0560">Oxidoreductase</keyword>
<keyword id="KW-1185">Reference proteome</keyword>
<protein>
    <recommendedName>
        <fullName evidence="1">Shikimate dehydrogenase (NADP(+))</fullName>
        <shortName evidence="1">SDH</shortName>
        <ecNumber evidence="1">1.1.1.25</ecNumber>
    </recommendedName>
</protein>
<proteinExistence type="inferred from homology"/>